<feature type="signal peptide" evidence="1">
    <location>
        <begin position="1"/>
        <end position="15"/>
    </location>
</feature>
<feature type="chain" id="PRO_0000036067" description="Putative UDP-glucuronosyltransferase ugt-60">
    <location>
        <begin position="16"/>
        <end position="507"/>
    </location>
</feature>
<feature type="transmembrane region" description="Helical" evidence="1">
    <location>
        <begin position="379"/>
        <end position="399"/>
    </location>
</feature>
<feature type="glycosylation site" description="N-linked (GlcNAc...) asparagine" evidence="1">
    <location>
        <position position="312"/>
    </location>
</feature>
<gene>
    <name type="primary">ugt-60</name>
    <name type="ORF">C07A9.6</name>
</gene>
<organism>
    <name type="scientific">Caenorhabditis elegans</name>
    <dbReference type="NCBI Taxonomy" id="6239"/>
    <lineage>
        <taxon>Eukaryota</taxon>
        <taxon>Metazoa</taxon>
        <taxon>Ecdysozoa</taxon>
        <taxon>Nematoda</taxon>
        <taxon>Chromadorea</taxon>
        <taxon>Rhabditida</taxon>
        <taxon>Rhabditina</taxon>
        <taxon>Rhabditomorpha</taxon>
        <taxon>Rhabditoidea</taxon>
        <taxon>Rhabditidae</taxon>
        <taxon>Peloderinae</taxon>
        <taxon>Caenorhabditis</taxon>
    </lineage>
</organism>
<name>UGT60_CAEEL</name>
<accession>P34317</accession>
<reference key="1">
    <citation type="journal article" date="1994" name="Nature">
        <title>2.2 Mb of contiguous nucleotide sequence from chromosome III of C. elegans.</title>
        <authorList>
            <person name="Wilson R."/>
            <person name="Ainscough R."/>
            <person name="Anderson K."/>
            <person name="Baynes C."/>
            <person name="Berks M."/>
            <person name="Bonfield J."/>
            <person name="Burton J."/>
            <person name="Connell M."/>
            <person name="Copsey T."/>
            <person name="Cooper J."/>
            <person name="Coulson A."/>
            <person name="Craxton M."/>
            <person name="Dear S."/>
            <person name="Du Z."/>
            <person name="Durbin R."/>
            <person name="Favello A."/>
            <person name="Fraser A."/>
            <person name="Fulton L."/>
            <person name="Gardner A."/>
            <person name="Green P."/>
            <person name="Hawkins T."/>
            <person name="Hillier L."/>
            <person name="Jier M."/>
            <person name="Johnston L."/>
            <person name="Jones M."/>
            <person name="Kershaw J."/>
            <person name="Kirsten J."/>
            <person name="Laisster N."/>
            <person name="Latreille P."/>
            <person name="Lightning J."/>
            <person name="Lloyd C."/>
            <person name="Mortimore B."/>
            <person name="O'Callaghan M."/>
            <person name="Parsons J."/>
            <person name="Percy C."/>
            <person name="Rifken L."/>
            <person name="Roopra A."/>
            <person name="Saunders D."/>
            <person name="Shownkeen R."/>
            <person name="Sims M."/>
            <person name="Smaldon N."/>
            <person name="Smith A."/>
            <person name="Smith M."/>
            <person name="Sonnhammer E."/>
            <person name="Staden R."/>
            <person name="Sulston J."/>
            <person name="Thierry-Mieg J."/>
            <person name="Thomas K."/>
            <person name="Vaudin M."/>
            <person name="Vaughan K."/>
            <person name="Waterston R."/>
            <person name="Watson A."/>
            <person name="Weinstock L."/>
            <person name="Wilkinson-Sproat J."/>
            <person name="Wohldman P."/>
        </authorList>
    </citation>
    <scope>NUCLEOTIDE SEQUENCE [LARGE SCALE GENOMIC DNA]</scope>
    <source>
        <strain>Bristol N2</strain>
    </source>
</reference>
<reference key="2">
    <citation type="journal article" date="1998" name="Science">
        <title>Genome sequence of the nematode C. elegans: a platform for investigating biology.</title>
        <authorList>
            <consortium name="The C. elegans sequencing consortium"/>
        </authorList>
    </citation>
    <scope>NUCLEOTIDE SEQUENCE [LARGE SCALE GENOMIC DNA]</scope>
    <source>
        <strain>Bristol N2</strain>
    </source>
</reference>
<keyword id="KW-0325">Glycoprotein</keyword>
<keyword id="KW-0328">Glycosyltransferase</keyword>
<keyword id="KW-0472">Membrane</keyword>
<keyword id="KW-1185">Reference proteome</keyword>
<keyword id="KW-0732">Signal</keyword>
<keyword id="KW-0808">Transferase</keyword>
<keyword id="KW-0812">Transmembrane</keyword>
<keyword id="KW-1133">Transmembrane helix</keyword>
<protein>
    <recommendedName>
        <fullName>Putative UDP-glucuronosyltransferase ugt-60</fullName>
        <shortName>UDPGT 60</shortName>
        <ecNumber>2.4.1.17</ecNumber>
    </recommendedName>
</protein>
<evidence type="ECO:0000255" key="1"/>
<evidence type="ECO:0000305" key="2"/>
<sequence>MYLPIFCIFLSVVDSLRILQIVPGFTNSHVLFNYRLAETLRFLGHDVKMWTQMEMAMLDTGNNKLPEGVSEYRIPIHFTDTLKTEGLKVFQSMMFESGDAHDLWWTGQEFKDMRVEACEQMLRHDESVYEDFRKDGFDVAIAHFHDLCPLAIAKKMNVKRVIWITHGTSIYEFSAVQLGLRTIPSTIPHPLSSAGFSQLFLDRVQNTLWHLSLLDFVNLPQNLLVDENLFYREFVGADQDDLWDLAKTTVPSLLINGDRMLDFPRPLPIHIAFSGELGVSKGKKLVMEKWLEDIIEKPSDGLIVFSLGTVSNTTNMPAQMINSFLGAFGKLKTYTILWRMEKSVAGAEKYENLHLVKWLPQKDIMRHPKMKLMIAHGGYNSFLEAAQAGIPAVLMPLFADQKINAKRAQRYGMATVLDKLDLTINNVYGAIKEALKPEYSTNAKKLSAMLSDQVARKPYSALRYSLKLATSPKPSLFTLKSQHLSFLEFHNLDIFSIVLLTAFIVCF</sequence>
<proteinExistence type="inferred from homology"/>
<comment type="catalytic activity">
    <reaction>
        <text>glucuronate acceptor + UDP-alpha-D-glucuronate = acceptor beta-D-glucuronoside + UDP + H(+)</text>
        <dbReference type="Rhea" id="RHEA:21032"/>
        <dbReference type="ChEBI" id="CHEBI:15378"/>
        <dbReference type="ChEBI" id="CHEBI:58052"/>
        <dbReference type="ChEBI" id="CHEBI:58223"/>
        <dbReference type="ChEBI" id="CHEBI:132367"/>
        <dbReference type="ChEBI" id="CHEBI:132368"/>
        <dbReference type="EC" id="2.4.1.17"/>
    </reaction>
</comment>
<comment type="subcellular location">
    <subcellularLocation>
        <location evidence="2">Membrane</location>
        <topology evidence="2">Single-pass membrane protein</topology>
    </subcellularLocation>
</comment>
<comment type="similarity">
    <text evidence="2">Belongs to the UDP-glycosyltransferase family.</text>
</comment>
<dbReference type="EC" id="2.4.1.17"/>
<dbReference type="EMBL" id="Z29094">
    <property type="protein sequence ID" value="CAA82344.2"/>
    <property type="molecule type" value="Genomic_DNA"/>
</dbReference>
<dbReference type="PIR" id="S40710">
    <property type="entry name" value="S40710"/>
</dbReference>
<dbReference type="RefSeq" id="NP_001021158.1">
    <property type="nucleotide sequence ID" value="NM_001025987.5"/>
</dbReference>
<dbReference type="SMR" id="P34317"/>
<dbReference type="BioGRID" id="41561">
    <property type="interactions" value="1"/>
</dbReference>
<dbReference type="FunCoup" id="P34317">
    <property type="interactions" value="2"/>
</dbReference>
<dbReference type="IntAct" id="P34317">
    <property type="interactions" value="1"/>
</dbReference>
<dbReference type="STRING" id="6239.C07A9.6.1"/>
<dbReference type="CAZy" id="GT1">
    <property type="family name" value="Glycosyltransferase Family 1"/>
</dbReference>
<dbReference type="GlyCosmos" id="P34317">
    <property type="glycosylation" value="1 site, No reported glycans"/>
</dbReference>
<dbReference type="PaxDb" id="6239-C07A9.6"/>
<dbReference type="PeptideAtlas" id="P34317"/>
<dbReference type="EnsemblMetazoa" id="C07A9.6.1">
    <property type="protein sequence ID" value="C07A9.6.1"/>
    <property type="gene ID" value="WBGene00007402"/>
</dbReference>
<dbReference type="GeneID" id="176366"/>
<dbReference type="KEGG" id="cel:CELE_C07A9.6"/>
<dbReference type="UCSC" id="C07A9.6">
    <property type="organism name" value="c. elegans"/>
</dbReference>
<dbReference type="AGR" id="WB:WBGene00007402"/>
<dbReference type="CTD" id="176366"/>
<dbReference type="WormBase" id="C07A9.6">
    <property type="protein sequence ID" value="CE33970"/>
    <property type="gene ID" value="WBGene00007402"/>
    <property type="gene designation" value="ugt-60"/>
</dbReference>
<dbReference type="eggNOG" id="KOG1192">
    <property type="taxonomic scope" value="Eukaryota"/>
</dbReference>
<dbReference type="GeneTree" id="ENSGT00940000164145"/>
<dbReference type="HOGENOM" id="CLU_012949_1_3_1"/>
<dbReference type="InParanoid" id="P34317"/>
<dbReference type="OMA" id="RVIWITH"/>
<dbReference type="OrthoDB" id="5835829at2759"/>
<dbReference type="PhylomeDB" id="P34317"/>
<dbReference type="Reactome" id="R-CEL-9840309">
    <property type="pathway name" value="Glycosphingolipid biosynthesis"/>
</dbReference>
<dbReference type="PRO" id="PR:P34317"/>
<dbReference type="Proteomes" id="UP000001940">
    <property type="component" value="Chromosome III"/>
</dbReference>
<dbReference type="Bgee" id="WBGene00007402">
    <property type="expression patterns" value="Expressed in material anatomical entity and 3 other cell types or tissues"/>
</dbReference>
<dbReference type="GO" id="GO:0016020">
    <property type="term" value="C:membrane"/>
    <property type="evidence" value="ECO:0007669"/>
    <property type="project" value="UniProtKB-SubCell"/>
</dbReference>
<dbReference type="GO" id="GO:0015020">
    <property type="term" value="F:glucuronosyltransferase activity"/>
    <property type="evidence" value="ECO:0007669"/>
    <property type="project" value="UniProtKB-EC"/>
</dbReference>
<dbReference type="GO" id="GO:0008194">
    <property type="term" value="F:UDP-glycosyltransferase activity"/>
    <property type="evidence" value="ECO:0000318"/>
    <property type="project" value="GO_Central"/>
</dbReference>
<dbReference type="CDD" id="cd03784">
    <property type="entry name" value="GT1_Gtf-like"/>
    <property type="match status" value="1"/>
</dbReference>
<dbReference type="FunFam" id="3.40.50.2000:FF:000118">
    <property type="entry name" value="UDP-glucuronosyltransferase"/>
    <property type="match status" value="1"/>
</dbReference>
<dbReference type="Gene3D" id="3.40.50.2000">
    <property type="entry name" value="Glycogen Phosphorylase B"/>
    <property type="match status" value="1"/>
</dbReference>
<dbReference type="InterPro" id="IPR050271">
    <property type="entry name" value="UDP-glycosyltransferase"/>
</dbReference>
<dbReference type="InterPro" id="IPR002213">
    <property type="entry name" value="UDP_glucos_trans"/>
</dbReference>
<dbReference type="InterPro" id="IPR035595">
    <property type="entry name" value="UDP_glycos_trans_CS"/>
</dbReference>
<dbReference type="PANTHER" id="PTHR48043">
    <property type="entry name" value="EG:EG0003.4 PROTEIN-RELATED"/>
    <property type="match status" value="1"/>
</dbReference>
<dbReference type="PANTHER" id="PTHR48043:SF46">
    <property type="entry name" value="UDP-GLUCURONOSYLTRANSFERASE UGT-60-RELATED"/>
    <property type="match status" value="1"/>
</dbReference>
<dbReference type="Pfam" id="PF00201">
    <property type="entry name" value="UDPGT"/>
    <property type="match status" value="1"/>
</dbReference>
<dbReference type="SUPFAM" id="SSF53756">
    <property type="entry name" value="UDP-Glycosyltransferase/glycogen phosphorylase"/>
    <property type="match status" value="1"/>
</dbReference>
<dbReference type="PROSITE" id="PS00375">
    <property type="entry name" value="UDPGT"/>
    <property type="match status" value="1"/>
</dbReference>